<organism>
    <name type="scientific">Neurospora crassa (strain ATCC 24698 / 74-OR23-1A / CBS 708.71 / DSM 1257 / FGSC 987)</name>
    <dbReference type="NCBI Taxonomy" id="367110"/>
    <lineage>
        <taxon>Eukaryota</taxon>
        <taxon>Fungi</taxon>
        <taxon>Dikarya</taxon>
        <taxon>Ascomycota</taxon>
        <taxon>Pezizomycotina</taxon>
        <taxon>Sordariomycetes</taxon>
        <taxon>Sordariomycetidae</taxon>
        <taxon>Sordariales</taxon>
        <taxon>Sordariaceae</taxon>
        <taxon>Neurospora</taxon>
    </lineage>
</organism>
<accession>Q7S5W0</accession>
<sequence length="103" mass="11776">MQPTRILQGLKYRKLRLTTKDVNKGFYKGNRTGSMGTHTSYGTYKIDYTKVRTYVCPDLTGFKLTPFVSKTIRPVHDQFPGDKLGPKNPATYLARWKSENGLD</sequence>
<evidence type="ECO:0000269" key="1">
    <source>
    </source>
</evidence>
<evidence type="ECO:0000303" key="2">
    <source>
    </source>
</evidence>
<evidence type="ECO:0000305" key="3"/>
<evidence type="ECO:0000305" key="4">
    <source>
    </source>
</evidence>
<evidence type="ECO:0007744" key="5">
    <source>
        <dbReference type="PDB" id="6YWS"/>
    </source>
</evidence>
<evidence type="ECO:0007744" key="6">
    <source>
        <dbReference type="PDB" id="6YWV"/>
    </source>
</evidence>
<feature type="chain" id="PRO_0000458588" description="Large ribosomal subunit protein mL41">
    <location>
        <begin position="1"/>
        <end position="103"/>
    </location>
</feature>
<comment type="function">
    <text evidence="4">Component of the mitochondrial ribosome (mitoribosome), a dedicated translation machinery responsible for the synthesis of mitochondrial genome-encoded proteins, including at least some of the essential transmembrane subunits of the mitochondrial respiratory chain. The mitoribosomes are attached to the mitochondrial inner membrane and translation products are cotranslationally integrated into the membrane.</text>
</comment>
<comment type="subunit">
    <text evidence="1">Component of the mitochondrial large ribosomal subunit (mt-LSU). Mature N.crassa 74S mitochondrial ribosomes consist of a small (37S) and a large (54S) subunit. The 37S small subunit contains a 16S ribosomal RNA (16S mt-rRNA) and 32 different proteins. The 54S large subunit contains a 23S rRNA (23S mt-rRNA) and 42 different proteins.</text>
</comment>
<comment type="subcellular location">
    <subcellularLocation>
        <location evidence="1">Mitochondrion</location>
    </subcellularLocation>
</comment>
<comment type="similarity">
    <text evidence="3">Belongs to the mitochondrion-specific ribosomal protein mL41 family.</text>
</comment>
<gene>
    <name type="primary">mrpl27</name>
    <name type="ORF">NCU07057</name>
</gene>
<proteinExistence type="evidence at protein level"/>
<name>RM27_NEUCR</name>
<protein>
    <recommendedName>
        <fullName evidence="2">Large ribosomal subunit protein mL41</fullName>
    </recommendedName>
</protein>
<reference key="1">
    <citation type="journal article" date="2003" name="Nature">
        <title>The genome sequence of the filamentous fungus Neurospora crassa.</title>
        <authorList>
            <person name="Galagan J.E."/>
            <person name="Calvo S.E."/>
            <person name="Borkovich K.A."/>
            <person name="Selker E.U."/>
            <person name="Read N.D."/>
            <person name="Jaffe D.B."/>
            <person name="FitzHugh W."/>
            <person name="Ma L.-J."/>
            <person name="Smirnov S."/>
            <person name="Purcell S."/>
            <person name="Rehman B."/>
            <person name="Elkins T."/>
            <person name="Engels R."/>
            <person name="Wang S."/>
            <person name="Nielsen C.B."/>
            <person name="Butler J."/>
            <person name="Endrizzi M."/>
            <person name="Qui D."/>
            <person name="Ianakiev P."/>
            <person name="Bell-Pedersen D."/>
            <person name="Nelson M.A."/>
            <person name="Werner-Washburne M."/>
            <person name="Selitrennikoff C.P."/>
            <person name="Kinsey J.A."/>
            <person name="Braun E.L."/>
            <person name="Zelter A."/>
            <person name="Schulte U."/>
            <person name="Kothe G.O."/>
            <person name="Jedd G."/>
            <person name="Mewes H.-W."/>
            <person name="Staben C."/>
            <person name="Marcotte E."/>
            <person name="Greenberg D."/>
            <person name="Roy A."/>
            <person name="Foley K."/>
            <person name="Naylor J."/>
            <person name="Stange-Thomann N."/>
            <person name="Barrett R."/>
            <person name="Gnerre S."/>
            <person name="Kamal M."/>
            <person name="Kamvysselis M."/>
            <person name="Mauceli E.W."/>
            <person name="Bielke C."/>
            <person name="Rudd S."/>
            <person name="Frishman D."/>
            <person name="Krystofova S."/>
            <person name="Rasmussen C."/>
            <person name="Metzenberg R.L."/>
            <person name="Perkins D.D."/>
            <person name="Kroken S."/>
            <person name="Cogoni C."/>
            <person name="Macino G."/>
            <person name="Catcheside D.E.A."/>
            <person name="Li W."/>
            <person name="Pratt R.J."/>
            <person name="Osmani S.A."/>
            <person name="DeSouza C.P.C."/>
            <person name="Glass N.L."/>
            <person name="Orbach M.J."/>
            <person name="Berglund J.A."/>
            <person name="Voelker R."/>
            <person name="Yarden O."/>
            <person name="Plamann M."/>
            <person name="Seiler S."/>
            <person name="Dunlap J.C."/>
            <person name="Radford A."/>
            <person name="Aramayo R."/>
            <person name="Natvig D.O."/>
            <person name="Alex L.A."/>
            <person name="Mannhaupt G."/>
            <person name="Ebbole D.J."/>
            <person name="Freitag M."/>
            <person name="Paulsen I."/>
            <person name="Sachs M.S."/>
            <person name="Lander E.S."/>
            <person name="Nusbaum C."/>
            <person name="Birren B.W."/>
        </authorList>
    </citation>
    <scope>NUCLEOTIDE SEQUENCE [LARGE SCALE GENOMIC DNA]</scope>
    <source>
        <strain>ATCC 24698 / 74-OR23-1A / CBS 708.71 / DSM 1257 / FGSC 987</strain>
    </source>
</reference>
<reference evidence="5 6" key="2">
    <citation type="journal article" date="2020" name="Nat. Commun.">
        <title>Analysis of translating mitoribosome reveals functional characteristics of translation in mitochondria of fungi.</title>
        <authorList>
            <person name="Itoh Y."/>
            <person name="Naschberger A."/>
            <person name="Mortezaei N."/>
            <person name="Herrmann J.M."/>
            <person name="Amunts A."/>
        </authorList>
    </citation>
    <scope>STRUCTURE BY ELECTRON MICROSCOPY (2.74 ANGSTROMS)</scope>
</reference>
<keyword id="KW-0002">3D-structure</keyword>
<keyword id="KW-0496">Mitochondrion</keyword>
<keyword id="KW-1185">Reference proteome</keyword>
<keyword id="KW-0687">Ribonucleoprotein</keyword>
<keyword id="KW-0689">Ribosomal protein</keyword>
<keyword id="KW-0809">Transit peptide</keyword>
<dbReference type="EMBL" id="CM002241">
    <property type="protein sequence ID" value="EAA30910.1"/>
    <property type="molecule type" value="Genomic_DNA"/>
</dbReference>
<dbReference type="RefSeq" id="XP_960146.1">
    <property type="nucleotide sequence ID" value="XM_955053.2"/>
</dbReference>
<dbReference type="PDB" id="6YWS">
    <property type="method" value="EM"/>
    <property type="resolution" value="2.74 A"/>
    <property type="chains" value="3=1-103"/>
</dbReference>
<dbReference type="PDB" id="6YWV">
    <property type="method" value="EM"/>
    <property type="resolution" value="3.03 A"/>
    <property type="chains" value="3=1-103"/>
</dbReference>
<dbReference type="PDB" id="6YWX">
    <property type="method" value="EM"/>
    <property type="resolution" value="3.10 A"/>
    <property type="chains" value="3=1-103"/>
</dbReference>
<dbReference type="PDBsum" id="6YWS"/>
<dbReference type="PDBsum" id="6YWV"/>
<dbReference type="PDBsum" id="6YWX"/>
<dbReference type="EMDB" id="EMD-10973"/>
<dbReference type="EMDB" id="EMD-10977"/>
<dbReference type="EMDB" id="EMD-10978"/>
<dbReference type="SMR" id="Q7S5W0"/>
<dbReference type="FunCoup" id="Q7S5W0">
    <property type="interactions" value="105"/>
</dbReference>
<dbReference type="STRING" id="367110.Q7S5W0"/>
<dbReference type="PaxDb" id="5141-EFNCRP00000006955"/>
<dbReference type="EnsemblFungi" id="EAA30910">
    <property type="protein sequence ID" value="EAA30910"/>
    <property type="gene ID" value="NCU07057"/>
</dbReference>
<dbReference type="GeneID" id="3876293"/>
<dbReference type="KEGG" id="ncr:NCU07057"/>
<dbReference type="VEuPathDB" id="FungiDB:NCU07057"/>
<dbReference type="HOGENOM" id="CLU_131055_3_0_1"/>
<dbReference type="InParanoid" id="Q7S5W0"/>
<dbReference type="OMA" id="YIIEWDK"/>
<dbReference type="OrthoDB" id="408933at2759"/>
<dbReference type="Proteomes" id="UP000001805">
    <property type="component" value="Chromosome 5, Linkage Group VI"/>
</dbReference>
<dbReference type="GO" id="GO:0005762">
    <property type="term" value="C:mitochondrial large ribosomal subunit"/>
    <property type="evidence" value="ECO:0000318"/>
    <property type="project" value="GO_Central"/>
</dbReference>
<dbReference type="GO" id="GO:0003735">
    <property type="term" value="F:structural constituent of ribosome"/>
    <property type="evidence" value="ECO:0000318"/>
    <property type="project" value="GO_Central"/>
</dbReference>
<dbReference type="GO" id="GO:0006412">
    <property type="term" value="P:translation"/>
    <property type="evidence" value="ECO:0000318"/>
    <property type="project" value="GO_Central"/>
</dbReference>
<dbReference type="InterPro" id="IPR019189">
    <property type="entry name" value="Ribosomal_mL41"/>
</dbReference>
<dbReference type="PANTHER" id="PTHR21338:SF0">
    <property type="entry name" value="LARGE RIBOSOMAL SUBUNIT PROTEIN ML41"/>
    <property type="match status" value="1"/>
</dbReference>
<dbReference type="PANTHER" id="PTHR21338">
    <property type="entry name" value="MITOCHONDRIAL RIBOSOMAL PROTEIN L41"/>
    <property type="match status" value="1"/>
</dbReference>
<dbReference type="Pfam" id="PF09809">
    <property type="entry name" value="MRP-L27"/>
    <property type="match status" value="1"/>
</dbReference>